<accession>Q7NCP5</accession>
<evidence type="ECO:0000255" key="1">
    <source>
        <dbReference type="HAMAP-Rule" id="MF_00005"/>
    </source>
</evidence>
<reference key="1">
    <citation type="journal article" date="2003" name="DNA Res.">
        <title>Complete genome structure of Gloeobacter violaceus PCC 7421, a cyanobacterium that lacks thylakoids.</title>
        <authorList>
            <person name="Nakamura Y."/>
            <person name="Kaneko T."/>
            <person name="Sato S."/>
            <person name="Mimuro M."/>
            <person name="Miyashita H."/>
            <person name="Tsuchiya T."/>
            <person name="Sasamoto S."/>
            <person name="Watanabe A."/>
            <person name="Kawashima K."/>
            <person name="Kishida Y."/>
            <person name="Kiyokawa C."/>
            <person name="Kohara M."/>
            <person name="Matsumoto M."/>
            <person name="Matsuno A."/>
            <person name="Nakazaki N."/>
            <person name="Shimpo S."/>
            <person name="Takeuchi C."/>
            <person name="Yamada M."/>
            <person name="Tabata S."/>
        </authorList>
    </citation>
    <scope>NUCLEOTIDE SEQUENCE [LARGE SCALE GENOMIC DNA]</scope>
    <source>
        <strain>ATCC 29082 / PCC 7421</strain>
    </source>
</reference>
<gene>
    <name evidence="1" type="primary">argG</name>
    <name type="ordered locus">glr2933</name>
</gene>
<keyword id="KW-0028">Amino-acid biosynthesis</keyword>
<keyword id="KW-0055">Arginine biosynthesis</keyword>
<keyword id="KW-0067">ATP-binding</keyword>
<keyword id="KW-0963">Cytoplasm</keyword>
<keyword id="KW-0436">Ligase</keyword>
<keyword id="KW-0547">Nucleotide-binding</keyword>
<keyword id="KW-1185">Reference proteome</keyword>
<feature type="chain" id="PRO_0000148596" description="Argininosuccinate synthase">
    <location>
        <begin position="1"/>
        <end position="398"/>
    </location>
</feature>
<feature type="binding site" evidence="1">
    <location>
        <begin position="9"/>
        <end position="17"/>
    </location>
    <ligand>
        <name>ATP</name>
        <dbReference type="ChEBI" id="CHEBI:30616"/>
    </ligand>
</feature>
<feature type="binding site" evidence="1">
    <location>
        <position position="37"/>
    </location>
    <ligand>
        <name>ATP</name>
        <dbReference type="ChEBI" id="CHEBI:30616"/>
    </ligand>
</feature>
<feature type="binding site" evidence="1">
    <location>
        <position position="88"/>
    </location>
    <ligand>
        <name>L-citrulline</name>
        <dbReference type="ChEBI" id="CHEBI:57743"/>
    </ligand>
</feature>
<feature type="binding site" evidence="1">
    <location>
        <position position="118"/>
    </location>
    <ligand>
        <name>ATP</name>
        <dbReference type="ChEBI" id="CHEBI:30616"/>
    </ligand>
</feature>
<feature type="binding site" evidence="1">
    <location>
        <position position="120"/>
    </location>
    <ligand>
        <name>L-aspartate</name>
        <dbReference type="ChEBI" id="CHEBI:29991"/>
    </ligand>
</feature>
<feature type="binding site" evidence="1">
    <location>
        <position position="124"/>
    </location>
    <ligand>
        <name>L-aspartate</name>
        <dbReference type="ChEBI" id="CHEBI:29991"/>
    </ligand>
</feature>
<feature type="binding site" evidence="1">
    <location>
        <position position="124"/>
    </location>
    <ligand>
        <name>L-citrulline</name>
        <dbReference type="ChEBI" id="CHEBI:57743"/>
    </ligand>
</feature>
<feature type="binding site" evidence="1">
    <location>
        <position position="125"/>
    </location>
    <ligand>
        <name>L-aspartate</name>
        <dbReference type="ChEBI" id="CHEBI:29991"/>
    </ligand>
</feature>
<feature type="binding site" evidence="1">
    <location>
        <position position="128"/>
    </location>
    <ligand>
        <name>L-citrulline</name>
        <dbReference type="ChEBI" id="CHEBI:57743"/>
    </ligand>
</feature>
<feature type="binding site" evidence="1">
    <location>
        <position position="176"/>
    </location>
    <ligand>
        <name>L-citrulline</name>
        <dbReference type="ChEBI" id="CHEBI:57743"/>
    </ligand>
</feature>
<feature type="binding site" evidence="1">
    <location>
        <position position="185"/>
    </location>
    <ligand>
        <name>L-citrulline</name>
        <dbReference type="ChEBI" id="CHEBI:57743"/>
    </ligand>
</feature>
<feature type="binding site" evidence="1">
    <location>
        <position position="261"/>
    </location>
    <ligand>
        <name>L-citrulline</name>
        <dbReference type="ChEBI" id="CHEBI:57743"/>
    </ligand>
</feature>
<feature type="binding site" evidence="1">
    <location>
        <position position="273"/>
    </location>
    <ligand>
        <name>L-citrulline</name>
        <dbReference type="ChEBI" id="CHEBI:57743"/>
    </ligand>
</feature>
<sequence length="398" mass="43362">MRAKKVVLAYSGGVDTSVCIPYLKHEWGVEQVVALAADLGQGEDLEAVRQKALASGADQAIVQDAREDFVYDYAFAALQANALYEGRYPLATALARPLIARILVKCAQAVGADAVAHGCTGKGNDQVRFDVSIGALDPKLKVLAPAREWGMSREETIAYGERYGIPAPVKKKSPYSIDFNLLGRSVECGVLEDPWAEPPEEVYAMTKCVADTPDQPTYIELEFERGVPVALNGASLGGVKLVGELNRLAGENGVGRIDMVENRLVGIKSREIYECPAGVVLVLAHQALEALTLPREVTAYKRGVEDTYAQLVYNGLWYSPLRGALDGFIDFTQQRASGVVRVRLHKGTATVVGRKSPYSLYDVELATYSEGDSFDHKAAEGFIYVWGLPTRIYAQVRK</sequence>
<protein>
    <recommendedName>
        <fullName evidence="1">Argininosuccinate synthase</fullName>
        <ecNumber evidence="1">6.3.4.5</ecNumber>
    </recommendedName>
    <alternativeName>
        <fullName evidence="1">Citrulline--aspartate ligase</fullName>
    </alternativeName>
</protein>
<comment type="catalytic activity">
    <reaction evidence="1">
        <text>L-citrulline + L-aspartate + ATP = 2-(N(omega)-L-arginino)succinate + AMP + diphosphate + H(+)</text>
        <dbReference type="Rhea" id="RHEA:10932"/>
        <dbReference type="ChEBI" id="CHEBI:15378"/>
        <dbReference type="ChEBI" id="CHEBI:29991"/>
        <dbReference type="ChEBI" id="CHEBI:30616"/>
        <dbReference type="ChEBI" id="CHEBI:33019"/>
        <dbReference type="ChEBI" id="CHEBI:57472"/>
        <dbReference type="ChEBI" id="CHEBI:57743"/>
        <dbReference type="ChEBI" id="CHEBI:456215"/>
        <dbReference type="EC" id="6.3.4.5"/>
    </reaction>
</comment>
<comment type="pathway">
    <text evidence="1">Amino-acid biosynthesis; L-arginine biosynthesis; L-arginine from L-ornithine and carbamoyl phosphate: step 2/3.</text>
</comment>
<comment type="subunit">
    <text evidence="1">Homotetramer.</text>
</comment>
<comment type="subcellular location">
    <subcellularLocation>
        <location evidence="1">Cytoplasm</location>
    </subcellularLocation>
</comment>
<comment type="similarity">
    <text evidence="1">Belongs to the argininosuccinate synthase family. Type 1 subfamily.</text>
</comment>
<organism>
    <name type="scientific">Gloeobacter violaceus (strain ATCC 29082 / PCC 7421)</name>
    <dbReference type="NCBI Taxonomy" id="251221"/>
    <lineage>
        <taxon>Bacteria</taxon>
        <taxon>Bacillati</taxon>
        <taxon>Cyanobacteriota</taxon>
        <taxon>Cyanophyceae</taxon>
        <taxon>Gloeobacterales</taxon>
        <taxon>Gloeobacteraceae</taxon>
        <taxon>Gloeobacter</taxon>
    </lineage>
</organism>
<name>ASSY_GLOVI</name>
<proteinExistence type="inferred from homology"/>
<dbReference type="EC" id="6.3.4.5" evidence="1"/>
<dbReference type="EMBL" id="BA000045">
    <property type="protein sequence ID" value="BAC90874.1"/>
    <property type="molecule type" value="Genomic_DNA"/>
</dbReference>
<dbReference type="RefSeq" id="NP_925879.1">
    <property type="nucleotide sequence ID" value="NC_005125.1"/>
</dbReference>
<dbReference type="RefSeq" id="WP_011142927.1">
    <property type="nucleotide sequence ID" value="NC_005125.1"/>
</dbReference>
<dbReference type="SMR" id="Q7NCP5"/>
<dbReference type="FunCoup" id="Q7NCP5">
    <property type="interactions" value="291"/>
</dbReference>
<dbReference type="STRING" id="251221.gene:10760437"/>
<dbReference type="EnsemblBacteria" id="BAC90874">
    <property type="protein sequence ID" value="BAC90874"/>
    <property type="gene ID" value="BAC90874"/>
</dbReference>
<dbReference type="KEGG" id="gvi:glr2933"/>
<dbReference type="PATRIC" id="fig|251221.4.peg.2962"/>
<dbReference type="eggNOG" id="COG0137">
    <property type="taxonomic scope" value="Bacteria"/>
</dbReference>
<dbReference type="HOGENOM" id="CLU_032784_4_2_3"/>
<dbReference type="InParanoid" id="Q7NCP5"/>
<dbReference type="OrthoDB" id="9801641at2"/>
<dbReference type="PhylomeDB" id="Q7NCP5"/>
<dbReference type="UniPathway" id="UPA00068">
    <property type="reaction ID" value="UER00113"/>
</dbReference>
<dbReference type="Proteomes" id="UP000000557">
    <property type="component" value="Chromosome"/>
</dbReference>
<dbReference type="GO" id="GO:0005737">
    <property type="term" value="C:cytoplasm"/>
    <property type="evidence" value="ECO:0000318"/>
    <property type="project" value="GO_Central"/>
</dbReference>
<dbReference type="GO" id="GO:0004055">
    <property type="term" value="F:argininosuccinate synthase activity"/>
    <property type="evidence" value="ECO:0000318"/>
    <property type="project" value="GO_Central"/>
</dbReference>
<dbReference type="GO" id="GO:0005524">
    <property type="term" value="F:ATP binding"/>
    <property type="evidence" value="ECO:0007669"/>
    <property type="project" value="UniProtKB-UniRule"/>
</dbReference>
<dbReference type="GO" id="GO:0000053">
    <property type="term" value="P:argininosuccinate metabolic process"/>
    <property type="evidence" value="ECO:0000318"/>
    <property type="project" value="GO_Central"/>
</dbReference>
<dbReference type="GO" id="GO:0006526">
    <property type="term" value="P:L-arginine biosynthetic process"/>
    <property type="evidence" value="ECO:0000318"/>
    <property type="project" value="GO_Central"/>
</dbReference>
<dbReference type="GO" id="GO:0000050">
    <property type="term" value="P:urea cycle"/>
    <property type="evidence" value="ECO:0000318"/>
    <property type="project" value="GO_Central"/>
</dbReference>
<dbReference type="CDD" id="cd01999">
    <property type="entry name" value="ASS"/>
    <property type="match status" value="1"/>
</dbReference>
<dbReference type="FunFam" id="1.20.5.470:FF:000002">
    <property type="entry name" value="Argininosuccinate synthase"/>
    <property type="match status" value="1"/>
</dbReference>
<dbReference type="FunFam" id="3.40.50.620:FF:000019">
    <property type="entry name" value="Argininosuccinate synthase"/>
    <property type="match status" value="1"/>
</dbReference>
<dbReference type="FunFam" id="3.90.1260.10:FF:000007">
    <property type="entry name" value="Argininosuccinate synthase"/>
    <property type="match status" value="1"/>
</dbReference>
<dbReference type="Gene3D" id="3.90.1260.10">
    <property type="entry name" value="Argininosuccinate synthetase, chain A, domain 2"/>
    <property type="match status" value="1"/>
</dbReference>
<dbReference type="Gene3D" id="3.40.50.620">
    <property type="entry name" value="HUPs"/>
    <property type="match status" value="1"/>
</dbReference>
<dbReference type="Gene3D" id="1.20.5.470">
    <property type="entry name" value="Single helix bin"/>
    <property type="match status" value="1"/>
</dbReference>
<dbReference type="HAMAP" id="MF_00005">
    <property type="entry name" value="Arg_succ_synth_type1"/>
    <property type="match status" value="1"/>
</dbReference>
<dbReference type="InterPro" id="IPR048268">
    <property type="entry name" value="Arginosuc_syn_C"/>
</dbReference>
<dbReference type="InterPro" id="IPR048267">
    <property type="entry name" value="Arginosuc_syn_N"/>
</dbReference>
<dbReference type="InterPro" id="IPR001518">
    <property type="entry name" value="Arginosuc_synth"/>
</dbReference>
<dbReference type="InterPro" id="IPR018223">
    <property type="entry name" value="Arginosuc_synth_CS"/>
</dbReference>
<dbReference type="InterPro" id="IPR023434">
    <property type="entry name" value="Arginosuc_synth_type_1_subfam"/>
</dbReference>
<dbReference type="InterPro" id="IPR024074">
    <property type="entry name" value="AS_cat/multimer_dom_body"/>
</dbReference>
<dbReference type="InterPro" id="IPR014729">
    <property type="entry name" value="Rossmann-like_a/b/a_fold"/>
</dbReference>
<dbReference type="NCBIfam" id="TIGR00032">
    <property type="entry name" value="argG"/>
    <property type="match status" value="1"/>
</dbReference>
<dbReference type="NCBIfam" id="NF001770">
    <property type="entry name" value="PRK00509.1"/>
    <property type="match status" value="1"/>
</dbReference>
<dbReference type="PANTHER" id="PTHR11587">
    <property type="entry name" value="ARGININOSUCCINATE SYNTHASE"/>
    <property type="match status" value="1"/>
</dbReference>
<dbReference type="PANTHER" id="PTHR11587:SF2">
    <property type="entry name" value="ARGININOSUCCINATE SYNTHASE"/>
    <property type="match status" value="1"/>
</dbReference>
<dbReference type="Pfam" id="PF20979">
    <property type="entry name" value="Arginosuc_syn_C"/>
    <property type="match status" value="1"/>
</dbReference>
<dbReference type="Pfam" id="PF00764">
    <property type="entry name" value="Arginosuc_synth"/>
    <property type="match status" value="1"/>
</dbReference>
<dbReference type="SUPFAM" id="SSF52402">
    <property type="entry name" value="Adenine nucleotide alpha hydrolases-like"/>
    <property type="match status" value="1"/>
</dbReference>
<dbReference type="SUPFAM" id="SSF69864">
    <property type="entry name" value="Argininosuccinate synthetase, C-terminal domain"/>
    <property type="match status" value="1"/>
</dbReference>
<dbReference type="PROSITE" id="PS00564">
    <property type="entry name" value="ARGININOSUCCIN_SYN_1"/>
    <property type="match status" value="1"/>
</dbReference>
<dbReference type="PROSITE" id="PS00565">
    <property type="entry name" value="ARGININOSUCCIN_SYN_2"/>
    <property type="match status" value="1"/>
</dbReference>